<dbReference type="EC" id="2.6.1.9"/>
<dbReference type="EMBL" id="BA000019">
    <property type="protein sequence ID" value="BAB76665.1"/>
    <property type="molecule type" value="Genomic_DNA"/>
</dbReference>
<dbReference type="PIR" id="AF2426">
    <property type="entry name" value="AF2426"/>
</dbReference>
<dbReference type="RefSeq" id="WP_010999092.1">
    <property type="nucleotide sequence ID" value="NZ_RSCN01000018.1"/>
</dbReference>
<dbReference type="SMR" id="Q8YMG7"/>
<dbReference type="STRING" id="103690.gene:10497021"/>
<dbReference type="KEGG" id="ana:all4966"/>
<dbReference type="eggNOG" id="COG0079">
    <property type="taxonomic scope" value="Bacteria"/>
</dbReference>
<dbReference type="OrthoDB" id="9813612at2"/>
<dbReference type="UniPathway" id="UPA00031">
    <property type="reaction ID" value="UER00012"/>
</dbReference>
<dbReference type="Proteomes" id="UP000002483">
    <property type="component" value="Chromosome"/>
</dbReference>
<dbReference type="GO" id="GO:0004400">
    <property type="term" value="F:histidinol-phosphate transaminase activity"/>
    <property type="evidence" value="ECO:0007669"/>
    <property type="project" value="UniProtKB-UniRule"/>
</dbReference>
<dbReference type="GO" id="GO:0030170">
    <property type="term" value="F:pyridoxal phosphate binding"/>
    <property type="evidence" value="ECO:0007669"/>
    <property type="project" value="InterPro"/>
</dbReference>
<dbReference type="GO" id="GO:0000105">
    <property type="term" value="P:L-histidine biosynthetic process"/>
    <property type="evidence" value="ECO:0007669"/>
    <property type="project" value="UniProtKB-UniRule"/>
</dbReference>
<dbReference type="CDD" id="cd00609">
    <property type="entry name" value="AAT_like"/>
    <property type="match status" value="1"/>
</dbReference>
<dbReference type="Gene3D" id="3.90.1150.10">
    <property type="entry name" value="Aspartate Aminotransferase, domain 1"/>
    <property type="match status" value="1"/>
</dbReference>
<dbReference type="Gene3D" id="3.40.640.10">
    <property type="entry name" value="Type I PLP-dependent aspartate aminotransferase-like (Major domain)"/>
    <property type="match status" value="1"/>
</dbReference>
<dbReference type="HAMAP" id="MF_01023">
    <property type="entry name" value="HisC_aminotrans_2"/>
    <property type="match status" value="1"/>
</dbReference>
<dbReference type="InterPro" id="IPR004839">
    <property type="entry name" value="Aminotransferase_I/II_large"/>
</dbReference>
<dbReference type="InterPro" id="IPR005861">
    <property type="entry name" value="HisP_aminotrans"/>
</dbReference>
<dbReference type="InterPro" id="IPR015424">
    <property type="entry name" value="PyrdxlP-dep_Trfase"/>
</dbReference>
<dbReference type="InterPro" id="IPR015421">
    <property type="entry name" value="PyrdxlP-dep_Trfase_major"/>
</dbReference>
<dbReference type="InterPro" id="IPR015422">
    <property type="entry name" value="PyrdxlP-dep_Trfase_small"/>
</dbReference>
<dbReference type="NCBIfam" id="TIGR01141">
    <property type="entry name" value="hisC"/>
    <property type="match status" value="1"/>
</dbReference>
<dbReference type="NCBIfam" id="NF002726">
    <property type="entry name" value="PRK02610.1"/>
    <property type="match status" value="1"/>
</dbReference>
<dbReference type="PANTHER" id="PTHR42885:SF2">
    <property type="entry name" value="HISTIDINOL-PHOSPHATE AMINOTRANSFERASE"/>
    <property type="match status" value="1"/>
</dbReference>
<dbReference type="PANTHER" id="PTHR42885">
    <property type="entry name" value="HISTIDINOL-PHOSPHATE AMINOTRANSFERASE-RELATED"/>
    <property type="match status" value="1"/>
</dbReference>
<dbReference type="Pfam" id="PF00155">
    <property type="entry name" value="Aminotran_1_2"/>
    <property type="match status" value="1"/>
</dbReference>
<dbReference type="SUPFAM" id="SSF53383">
    <property type="entry name" value="PLP-dependent transferases"/>
    <property type="match status" value="1"/>
</dbReference>
<evidence type="ECO:0000250" key="1"/>
<evidence type="ECO:0000305" key="2"/>
<feature type="chain" id="PRO_0000153294" description="Histidinol-phosphate aminotransferase 2">
    <location>
        <begin position="1"/>
        <end position="384"/>
    </location>
</feature>
<feature type="modified residue" description="N6-(pyridoxal phosphate)lysine" evidence="1">
    <location>
        <position position="236"/>
    </location>
</feature>
<reference key="1">
    <citation type="journal article" date="2001" name="DNA Res.">
        <title>Complete genomic sequence of the filamentous nitrogen-fixing cyanobacterium Anabaena sp. strain PCC 7120.</title>
        <authorList>
            <person name="Kaneko T."/>
            <person name="Nakamura Y."/>
            <person name="Wolk C.P."/>
            <person name="Kuritz T."/>
            <person name="Sasamoto S."/>
            <person name="Watanabe A."/>
            <person name="Iriguchi M."/>
            <person name="Ishikawa A."/>
            <person name="Kawashima K."/>
            <person name="Kimura T."/>
            <person name="Kishida Y."/>
            <person name="Kohara M."/>
            <person name="Matsumoto M."/>
            <person name="Matsuno A."/>
            <person name="Muraki A."/>
            <person name="Nakazaki N."/>
            <person name="Shimpo S."/>
            <person name="Sugimoto M."/>
            <person name="Takazawa M."/>
            <person name="Yamada M."/>
            <person name="Yasuda M."/>
            <person name="Tabata S."/>
        </authorList>
    </citation>
    <scope>NUCLEOTIDE SEQUENCE [LARGE SCALE GENOMIC DNA]</scope>
    <source>
        <strain>PCC 7120 / SAG 25.82 / UTEX 2576</strain>
    </source>
</reference>
<proteinExistence type="inferred from homology"/>
<gene>
    <name type="primary">hisC2</name>
    <name type="ordered locus">all4966</name>
</gene>
<keyword id="KW-0028">Amino-acid biosynthesis</keyword>
<keyword id="KW-0032">Aminotransferase</keyword>
<keyword id="KW-0368">Histidine biosynthesis</keyword>
<keyword id="KW-0663">Pyridoxal phosphate</keyword>
<keyword id="KW-1185">Reference proteome</keyword>
<keyword id="KW-0808">Transferase</keyword>
<organism>
    <name type="scientific">Nostoc sp. (strain PCC 7120 / SAG 25.82 / UTEX 2576)</name>
    <dbReference type="NCBI Taxonomy" id="103690"/>
    <lineage>
        <taxon>Bacteria</taxon>
        <taxon>Bacillati</taxon>
        <taxon>Cyanobacteriota</taxon>
        <taxon>Cyanophyceae</taxon>
        <taxon>Nostocales</taxon>
        <taxon>Nostocaceae</taxon>
        <taxon>Nostoc</taxon>
    </lineage>
</organism>
<comment type="catalytic activity">
    <reaction>
        <text>L-histidinol phosphate + 2-oxoglutarate = 3-(imidazol-4-yl)-2-oxopropyl phosphate + L-glutamate</text>
        <dbReference type="Rhea" id="RHEA:23744"/>
        <dbReference type="ChEBI" id="CHEBI:16810"/>
        <dbReference type="ChEBI" id="CHEBI:29985"/>
        <dbReference type="ChEBI" id="CHEBI:57766"/>
        <dbReference type="ChEBI" id="CHEBI:57980"/>
        <dbReference type="EC" id="2.6.1.9"/>
    </reaction>
</comment>
<comment type="cofactor">
    <cofactor evidence="1">
        <name>pyridoxal 5'-phosphate</name>
        <dbReference type="ChEBI" id="CHEBI:597326"/>
    </cofactor>
</comment>
<comment type="pathway">
    <text>Amino-acid biosynthesis; L-histidine biosynthesis; L-histidine from 5-phospho-alpha-D-ribose 1-diphosphate: step 7/9.</text>
</comment>
<comment type="subunit">
    <text evidence="1">Homodimer.</text>
</comment>
<comment type="similarity">
    <text evidence="2">Belongs to the class-II pyridoxal-phosphate-dependent aminotransferase family. Histidinol-phosphate aminotransferase subfamily.</text>
</comment>
<accession>Q8YMG7</accession>
<name>HIS82_NOSS1</name>
<protein>
    <recommendedName>
        <fullName>Histidinol-phosphate aminotransferase 2</fullName>
        <ecNumber>2.6.1.9</ecNumber>
    </recommendedName>
    <alternativeName>
        <fullName>Imidazole acetol-phosphate transaminase 2</fullName>
    </alternativeName>
</protein>
<sequence length="384" mass="42118">MLPFIRSDLAQFNAYKPHPSSDTASAVPPQLDRLDTNESPYDLPPELKQKLAWTFQQVIESNRYPDGGHETLKSAIAEYVNESANISSLRFTAANISVGNGSDELIRSLLIATCLSGEGSILVANPTFSMYGILAQTLGIPVVSVSRNPDNFAIDLTAAQSAIEQTLNPPIRVVFVVHPNSPTANPLTANELRWLKSLSERILVVVDEAYFEFSQNTLVSELAQRPNWIILRTFSKAFRLAAMRVGYCVAHPEAIAILEKVRLPYNLPSFSIASALVALQNRAILLESIPQTLDERTKLINAFSQHPALAVAESAANFIFLRLKADSDNSSDTTLLNLHQQLKNSGTLVRQISGGLRITIGTPEENIRTLNHIQTALIKPELVG</sequence>